<comment type="function">
    <text evidence="1">Mediates apoptosis and actin stress fiber dissolution.</text>
</comment>
<comment type="catalytic activity">
    <reaction>
        <text>L-seryl-[protein] + ATP = O-phospho-L-seryl-[protein] + ADP + H(+)</text>
        <dbReference type="Rhea" id="RHEA:17989"/>
        <dbReference type="Rhea" id="RHEA-COMP:9863"/>
        <dbReference type="Rhea" id="RHEA-COMP:11604"/>
        <dbReference type="ChEBI" id="CHEBI:15378"/>
        <dbReference type="ChEBI" id="CHEBI:29999"/>
        <dbReference type="ChEBI" id="CHEBI:30616"/>
        <dbReference type="ChEBI" id="CHEBI:83421"/>
        <dbReference type="ChEBI" id="CHEBI:456216"/>
        <dbReference type="EC" id="2.7.11.1"/>
    </reaction>
</comment>
<comment type="catalytic activity">
    <reaction>
        <text>L-threonyl-[protein] + ATP = O-phospho-L-threonyl-[protein] + ADP + H(+)</text>
        <dbReference type="Rhea" id="RHEA:46608"/>
        <dbReference type="Rhea" id="RHEA-COMP:11060"/>
        <dbReference type="Rhea" id="RHEA-COMP:11605"/>
        <dbReference type="ChEBI" id="CHEBI:15378"/>
        <dbReference type="ChEBI" id="CHEBI:30013"/>
        <dbReference type="ChEBI" id="CHEBI:30616"/>
        <dbReference type="ChEBI" id="CHEBI:61977"/>
        <dbReference type="ChEBI" id="CHEBI:456216"/>
        <dbReference type="EC" id="2.7.11.1"/>
    </reaction>
</comment>
<comment type="subcellular location">
    <subcellularLocation>
        <location evidence="1">Cytoplasm</location>
    </subcellularLocation>
</comment>
<comment type="PTM">
    <text evidence="1">Proteolytically cleaved by caspase-3.</text>
</comment>
<comment type="PTM">
    <text>Autophosphorylated.</text>
</comment>
<comment type="similarity">
    <text evidence="9">Belongs to the protein kinase superfamily. STE Ser/Thr protein kinase family. STE20 subfamily.</text>
</comment>
<protein>
    <recommendedName>
        <fullName>STE20-like serine/threonine-protein kinase</fullName>
        <shortName>STE20-like kinase</shortName>
        <ecNumber>2.7.11.1</ecNumber>
    </recommendedName>
    <alternativeName>
        <fullName>STE20-related serine/threonine-protein kinase</fullName>
        <shortName>STE20-related kinase</shortName>
    </alternativeName>
</protein>
<organism>
    <name type="scientific">Rattus norvegicus</name>
    <name type="common">Rat</name>
    <dbReference type="NCBI Taxonomy" id="10116"/>
    <lineage>
        <taxon>Eukaryota</taxon>
        <taxon>Metazoa</taxon>
        <taxon>Chordata</taxon>
        <taxon>Craniata</taxon>
        <taxon>Vertebrata</taxon>
        <taxon>Euteleostomi</taxon>
        <taxon>Mammalia</taxon>
        <taxon>Eutheria</taxon>
        <taxon>Euarchontoglires</taxon>
        <taxon>Glires</taxon>
        <taxon>Rodentia</taxon>
        <taxon>Myomorpha</taxon>
        <taxon>Muroidea</taxon>
        <taxon>Muridae</taxon>
        <taxon>Murinae</taxon>
        <taxon>Rattus</taxon>
    </lineage>
</organism>
<accession>O08815</accession>
<evidence type="ECO:0000250" key="1"/>
<evidence type="ECO:0000250" key="2">
    <source>
        <dbReference type="UniProtKB" id="O54988"/>
    </source>
</evidence>
<evidence type="ECO:0000250" key="3">
    <source>
        <dbReference type="UniProtKB" id="Q9H2G2"/>
    </source>
</evidence>
<evidence type="ECO:0000255" key="4"/>
<evidence type="ECO:0000255" key="5">
    <source>
        <dbReference type="PROSITE-ProRule" id="PRU00159"/>
    </source>
</evidence>
<evidence type="ECO:0000255" key="6">
    <source>
        <dbReference type="PROSITE-ProRule" id="PRU00217"/>
    </source>
</evidence>
<evidence type="ECO:0000255" key="7">
    <source>
        <dbReference type="PROSITE-ProRule" id="PRU10027"/>
    </source>
</evidence>
<evidence type="ECO:0000256" key="8">
    <source>
        <dbReference type="SAM" id="MobiDB-lite"/>
    </source>
</evidence>
<evidence type="ECO:0000305" key="9"/>
<evidence type="ECO:0007744" key="10">
    <source>
    </source>
</evidence>
<reference key="1">
    <citation type="submission" date="1997-04" db="EMBL/GenBank/DDBJ databases">
        <title>SK2, a putative rat homologue of yeast protein kinase NRK1.</title>
        <authorList>
            <person name="Fukami Y."/>
            <person name="Yamamoto H."/>
            <person name="Ichihara T."/>
            <person name="Mori K."/>
            <person name="Gomi T."/>
            <person name="Sato K."/>
        </authorList>
    </citation>
    <scope>NUCLEOTIDE SEQUENCE [MRNA]</scope>
    <source>
        <strain>Sprague-Dawley</strain>
    </source>
</reference>
<reference key="2">
    <citation type="journal article" date="1991" name="Mol. Immunol.">
        <title>Novel putative protein kinase clones from a rat large granular lymphocyte tumor cell line.</title>
        <authorList>
            <person name="Yue C.C."/>
        </authorList>
    </citation>
    <scope>NUCLEOTIDE SEQUENCE [MRNA] OF 156-214</scope>
</reference>
<reference key="3">
    <citation type="journal article" date="2012" name="Nat. Commun.">
        <title>Quantitative maps of protein phosphorylation sites across 14 different rat organs and tissues.</title>
        <authorList>
            <person name="Lundby A."/>
            <person name="Secher A."/>
            <person name="Lage K."/>
            <person name="Nordsborg N.B."/>
            <person name="Dmytriyev A."/>
            <person name="Lundby C."/>
            <person name="Olsen J.V."/>
        </authorList>
    </citation>
    <scope>PHOSPHORYLATION [LARGE SCALE ANALYSIS] AT SER-340; SER-347; SER-348; SER-645; SER-649 AND SER-778</scope>
    <scope>IDENTIFICATION BY MASS SPECTROMETRY [LARGE SCALE ANALYSIS]</scope>
</reference>
<gene>
    <name type="primary">Slk</name>
    <name type="synonym">Sk2</name>
</gene>
<dbReference type="EC" id="2.7.11.1"/>
<dbReference type="EMBL" id="AB003357">
    <property type="protein sequence ID" value="BAA20077.1"/>
    <property type="molecule type" value="mRNA"/>
</dbReference>
<dbReference type="PIR" id="PT0204">
    <property type="entry name" value="PT0204"/>
</dbReference>
<dbReference type="PIR" id="T34021">
    <property type="entry name" value="T34021"/>
</dbReference>
<dbReference type="RefSeq" id="NP_062222.2">
    <property type="nucleotide sequence ID" value="NM_019349.2"/>
</dbReference>
<dbReference type="SMR" id="O08815"/>
<dbReference type="FunCoup" id="O08815">
    <property type="interactions" value="4046"/>
</dbReference>
<dbReference type="IntAct" id="O08815">
    <property type="interactions" value="1"/>
</dbReference>
<dbReference type="STRING" id="10116.ENSRNOP00000015496"/>
<dbReference type="GlyGen" id="O08815">
    <property type="glycosylation" value="1 site"/>
</dbReference>
<dbReference type="iPTMnet" id="O08815"/>
<dbReference type="PhosphoSitePlus" id="O08815"/>
<dbReference type="jPOST" id="O08815"/>
<dbReference type="PaxDb" id="10116-ENSRNOP00000015496"/>
<dbReference type="GeneID" id="54308"/>
<dbReference type="KEGG" id="rno:54308"/>
<dbReference type="UCSC" id="RGD:3780">
    <property type="organism name" value="rat"/>
</dbReference>
<dbReference type="AGR" id="RGD:3780"/>
<dbReference type="CTD" id="9748"/>
<dbReference type="RGD" id="3780">
    <property type="gene designation" value="Slk"/>
</dbReference>
<dbReference type="eggNOG" id="KOG0579">
    <property type="taxonomic scope" value="Eukaryota"/>
</dbReference>
<dbReference type="InParanoid" id="O08815"/>
<dbReference type="Reactome" id="R-RNO-8980692">
    <property type="pathway name" value="RHOA GTPase cycle"/>
</dbReference>
<dbReference type="Reactome" id="R-RNO-9013026">
    <property type="pathway name" value="RHOB GTPase cycle"/>
</dbReference>
<dbReference type="PRO" id="PR:O08815"/>
<dbReference type="Proteomes" id="UP000002494">
    <property type="component" value="Unplaced"/>
</dbReference>
<dbReference type="GO" id="GO:0031252">
    <property type="term" value="C:cell leading edge"/>
    <property type="evidence" value="ECO:0000250"/>
    <property type="project" value="UniProtKB"/>
</dbReference>
<dbReference type="GO" id="GO:0005737">
    <property type="term" value="C:cytoplasm"/>
    <property type="evidence" value="ECO:0000266"/>
    <property type="project" value="RGD"/>
</dbReference>
<dbReference type="GO" id="GO:0048471">
    <property type="term" value="C:perinuclear region of cytoplasm"/>
    <property type="evidence" value="ECO:0000250"/>
    <property type="project" value="UniProtKB"/>
</dbReference>
<dbReference type="GO" id="GO:0005524">
    <property type="term" value="F:ATP binding"/>
    <property type="evidence" value="ECO:0007669"/>
    <property type="project" value="UniProtKB-KW"/>
</dbReference>
<dbReference type="GO" id="GO:0035173">
    <property type="term" value="F:histone kinase activity"/>
    <property type="evidence" value="ECO:0000314"/>
    <property type="project" value="RGD"/>
</dbReference>
<dbReference type="GO" id="GO:0042802">
    <property type="term" value="F:identical protein binding"/>
    <property type="evidence" value="ECO:0000266"/>
    <property type="project" value="RGD"/>
</dbReference>
<dbReference type="GO" id="GO:0042803">
    <property type="term" value="F:protein homodimerization activity"/>
    <property type="evidence" value="ECO:0000250"/>
    <property type="project" value="UniProtKB"/>
</dbReference>
<dbReference type="GO" id="GO:0004672">
    <property type="term" value="F:protein kinase activity"/>
    <property type="evidence" value="ECO:0000314"/>
    <property type="project" value="RGD"/>
</dbReference>
<dbReference type="GO" id="GO:0106310">
    <property type="term" value="F:protein serine kinase activity"/>
    <property type="evidence" value="ECO:0007669"/>
    <property type="project" value="RHEA"/>
</dbReference>
<dbReference type="GO" id="GO:0004674">
    <property type="term" value="F:protein serine/threonine kinase activity"/>
    <property type="evidence" value="ECO:0000250"/>
    <property type="project" value="UniProtKB"/>
</dbReference>
<dbReference type="GO" id="GO:0006915">
    <property type="term" value="P:apoptotic process"/>
    <property type="evidence" value="ECO:0007669"/>
    <property type="project" value="UniProtKB-KW"/>
</dbReference>
<dbReference type="GO" id="GO:0071356">
    <property type="term" value="P:cellular response to tumor necrosis factor"/>
    <property type="evidence" value="ECO:0000270"/>
    <property type="project" value="RGD"/>
</dbReference>
<dbReference type="GO" id="GO:0071346">
    <property type="term" value="P:cellular response to type II interferon"/>
    <property type="evidence" value="ECO:0000314"/>
    <property type="project" value="RGD"/>
</dbReference>
<dbReference type="GO" id="GO:0031122">
    <property type="term" value="P:cytoplasmic microtubule organization"/>
    <property type="evidence" value="ECO:0000266"/>
    <property type="project" value="RGD"/>
</dbReference>
<dbReference type="GO" id="GO:0035556">
    <property type="term" value="P:intracellular signal transduction"/>
    <property type="evidence" value="ECO:0000318"/>
    <property type="project" value="GO_Central"/>
</dbReference>
<dbReference type="GO" id="GO:0043065">
    <property type="term" value="P:positive regulation of apoptotic process"/>
    <property type="evidence" value="ECO:0000315"/>
    <property type="project" value="RGD"/>
</dbReference>
<dbReference type="GO" id="GO:0042981">
    <property type="term" value="P:regulation of apoptotic process"/>
    <property type="evidence" value="ECO:0000266"/>
    <property type="project" value="RGD"/>
</dbReference>
<dbReference type="GO" id="GO:0030334">
    <property type="term" value="P:regulation of cell migration"/>
    <property type="evidence" value="ECO:0000250"/>
    <property type="project" value="UniProtKB"/>
</dbReference>
<dbReference type="GO" id="GO:0051893">
    <property type="term" value="P:regulation of focal adhesion assembly"/>
    <property type="evidence" value="ECO:0000250"/>
    <property type="project" value="UniProtKB"/>
</dbReference>
<dbReference type="CDD" id="cd06643">
    <property type="entry name" value="STKc_SLK"/>
    <property type="match status" value="1"/>
</dbReference>
<dbReference type="FunFam" id="1.10.510.10:FF:000081">
    <property type="entry name" value="STE20-like serine/threonine-protein kinase"/>
    <property type="match status" value="1"/>
</dbReference>
<dbReference type="FunFam" id="3.30.200.20:FF:000120">
    <property type="entry name" value="STE20-like serine/threonine-protein kinase"/>
    <property type="match status" value="1"/>
</dbReference>
<dbReference type="Gene3D" id="3.30.200.20">
    <property type="entry name" value="Phosphorylase Kinase, domain 1"/>
    <property type="match status" value="1"/>
</dbReference>
<dbReference type="Gene3D" id="1.10.510.10">
    <property type="entry name" value="Transferase(Phosphotransferase) domain 1"/>
    <property type="match status" value="1"/>
</dbReference>
<dbReference type="InterPro" id="IPR011009">
    <property type="entry name" value="Kinase-like_dom_sf"/>
</dbReference>
<dbReference type="InterPro" id="IPR022165">
    <property type="entry name" value="PKK"/>
</dbReference>
<dbReference type="InterPro" id="IPR000719">
    <property type="entry name" value="Prot_kinase_dom"/>
</dbReference>
<dbReference type="InterPro" id="IPR017441">
    <property type="entry name" value="Protein_kinase_ATP_BS"/>
</dbReference>
<dbReference type="InterPro" id="IPR008271">
    <property type="entry name" value="Ser/Thr_kinase_AS"/>
</dbReference>
<dbReference type="InterPro" id="IPR051585">
    <property type="entry name" value="STE20_Ser/Thr_Kinases"/>
</dbReference>
<dbReference type="InterPro" id="IPR001943">
    <property type="entry name" value="UVR_dom"/>
</dbReference>
<dbReference type="PANTHER" id="PTHR46538:SF1">
    <property type="entry name" value="NON-SPECIFIC SERINE_THREONINE PROTEIN KINASE"/>
    <property type="match status" value="1"/>
</dbReference>
<dbReference type="PANTHER" id="PTHR46538">
    <property type="entry name" value="PROTEIN KINASE DOMAIN-CONTAINING PROTEIN"/>
    <property type="match status" value="1"/>
</dbReference>
<dbReference type="Pfam" id="PF00069">
    <property type="entry name" value="Pkinase"/>
    <property type="match status" value="1"/>
</dbReference>
<dbReference type="Pfam" id="PF12474">
    <property type="entry name" value="PKK"/>
    <property type="match status" value="2"/>
</dbReference>
<dbReference type="SMART" id="SM00220">
    <property type="entry name" value="S_TKc"/>
    <property type="match status" value="1"/>
</dbReference>
<dbReference type="SUPFAM" id="SSF56112">
    <property type="entry name" value="Protein kinase-like (PK-like)"/>
    <property type="match status" value="1"/>
</dbReference>
<dbReference type="PROSITE" id="PS00107">
    <property type="entry name" value="PROTEIN_KINASE_ATP"/>
    <property type="match status" value="1"/>
</dbReference>
<dbReference type="PROSITE" id="PS50011">
    <property type="entry name" value="PROTEIN_KINASE_DOM"/>
    <property type="match status" value="1"/>
</dbReference>
<dbReference type="PROSITE" id="PS00108">
    <property type="entry name" value="PROTEIN_KINASE_ST"/>
    <property type="match status" value="1"/>
</dbReference>
<dbReference type="PROSITE" id="PS50151">
    <property type="entry name" value="UVR"/>
    <property type="match status" value="1"/>
</dbReference>
<sequence>MSFFNFRKIFKLGSEKKKKQYEHVKRDLNPEEFWEIIGELGDGAFGKVYKAQNKETNVLAAAKVIDTKSEEELEDYMVEIDILASCDHPNIVKLLDAFYYENNLWILIEFCAGGAVDAVMLELERPLTESQIQVVCKQTLEALNYLHDNKIIHRDLKAGNILFTLDGDIKLADFGVSAKNTRTIQRRDSFIGTPYWMAPEVVMCETSKDRPYDYKADVWSLGITLIEMAEIEPPHHELNPMRVLLKIAKSEPPTLAQPSRWSSNFKDFLKKCLEKNVDARWTTSQLLQHPFVTVDSNKPVRELIAEAKAEVTEEVEDGKEEDDDDETESALPIPANKRASSDLSIASSEEDKLSQNACILESVSERTEHNTSGDKFSNKVLSEKPTPEGPEKTVDVDGPANDVNLETVAEPNDQAVGFHENGREKKRPQLESQPDTEDQQTVDVNLVGEGNDSNIVILETNTDCLKPEEDRNEENQEIIENKLTQSEEIKDIHIQTMDLVSQETGEKEADFQAIDNEVGFTKEETQEKLGKDDKTHKVVISDITSEVGTDEPPGDTQKSAEQSQDAEGGAGEEAPEPAQTLTEKATEGPEAHGAEEEPRSGERVEDKQLEQQSAVCEGEGQVTSTSESTRATTEEPETDEVDQVSESNSIEELERLGVTGAEEQALGSKGEAATELDLEREENAQELPVKAEPQAPAASQASEPPPVLIPSINIHSENTENKGEMGALPKPETILPPEPENGKGNDTDSGTGSTVENSSSDLNLSISSFLSKTKDSGSVSLQETRRQKKTLKKTRKFIVDGVEVSVTTSKIVTDSDSKTEELRFLRRQELRELRLLQKEEQKAQQQLNGKLQQQREQIFRRFEQEMLSKKRQYDQEIENLEKQQKQTIERLEQEHTNRLRDEAKRIKGEQEKELSKFQNMLRNRKKEEQEFVQKQQQELDGALKKIIQQQKAELANIERECLNNKQQLLRAREAAIWELEERHLQEKHQLLKQQLKDQYFIQRHQLLKRHEKETEQMQRYNQRLIEELKNRQTQERARLPKIQRSEAKTRMAMFKKSLRINSTATPDQDREKIKQFAAQEEKRQKNERMAQHQKHESQMRDLQLQCEANVRELHQLQNEKCHLLVEHETQKLKELDEEHSQELKEWREKLRPRKKTLEEEFARKLQEQEVFFKMTGESECLNPSAQSRGCLQTSHPSSTRAPAWAG</sequence>
<proteinExistence type="evidence at protein level"/>
<name>SLK_RAT</name>
<keyword id="KW-0053">Apoptosis</keyword>
<keyword id="KW-0067">ATP-binding</keyword>
<keyword id="KW-0175">Coiled coil</keyword>
<keyword id="KW-0963">Cytoplasm</keyword>
<keyword id="KW-0418">Kinase</keyword>
<keyword id="KW-0547">Nucleotide-binding</keyword>
<keyword id="KW-0597">Phosphoprotein</keyword>
<keyword id="KW-1185">Reference proteome</keyword>
<keyword id="KW-0723">Serine/threonine-protein kinase</keyword>
<keyword id="KW-0808">Transferase</keyword>
<feature type="chain" id="PRO_0000233241" description="STE20-like serine/threonine-protein kinase">
    <location>
        <begin position="1"/>
        <end position="1206"/>
    </location>
</feature>
<feature type="domain" description="Protein kinase" evidence="5">
    <location>
        <begin position="34"/>
        <end position="292"/>
    </location>
</feature>
<feature type="domain" description="UVR" evidence="6">
    <location>
        <begin position="874"/>
        <end position="909"/>
    </location>
</feature>
<feature type="region of interest" description="Disordered" evidence="8">
    <location>
        <begin position="308"/>
        <end position="352"/>
    </location>
</feature>
<feature type="region of interest" description="Disordered" evidence="8">
    <location>
        <begin position="364"/>
        <end position="440"/>
    </location>
</feature>
<feature type="region of interest" description="Disordered" evidence="8">
    <location>
        <begin position="515"/>
        <end position="761"/>
    </location>
</feature>
<feature type="region of interest" description="Disordered" evidence="8">
    <location>
        <begin position="773"/>
        <end position="792"/>
    </location>
</feature>
<feature type="region of interest" description="Disordered" evidence="8">
    <location>
        <begin position="1079"/>
        <end position="1100"/>
    </location>
</feature>
<feature type="region of interest" description="Disordered" evidence="8">
    <location>
        <begin position="1181"/>
        <end position="1206"/>
    </location>
</feature>
<feature type="coiled-coil region" evidence="4">
    <location>
        <begin position="468"/>
        <end position="492"/>
    </location>
</feature>
<feature type="coiled-coil region" evidence="4">
    <location>
        <begin position="825"/>
        <end position="1037"/>
    </location>
</feature>
<feature type="coiled-coil region" evidence="4">
    <location>
        <begin position="1077"/>
        <end position="1151"/>
    </location>
</feature>
<feature type="compositionally biased region" description="Acidic residues" evidence="8">
    <location>
        <begin position="312"/>
        <end position="328"/>
    </location>
</feature>
<feature type="compositionally biased region" description="Basic and acidic residues" evidence="8">
    <location>
        <begin position="381"/>
        <end position="395"/>
    </location>
</feature>
<feature type="compositionally biased region" description="Basic and acidic residues" evidence="8">
    <location>
        <begin position="420"/>
        <end position="429"/>
    </location>
</feature>
<feature type="compositionally biased region" description="Basic and acidic residues" evidence="8">
    <location>
        <begin position="520"/>
        <end position="536"/>
    </location>
</feature>
<feature type="compositionally biased region" description="Polar residues" evidence="8">
    <location>
        <begin position="556"/>
        <end position="565"/>
    </location>
</feature>
<feature type="compositionally biased region" description="Basic and acidic residues" evidence="8">
    <location>
        <begin position="584"/>
        <end position="609"/>
    </location>
</feature>
<feature type="compositionally biased region" description="Acidic residues" evidence="8">
    <location>
        <begin position="634"/>
        <end position="643"/>
    </location>
</feature>
<feature type="compositionally biased region" description="Low complexity" evidence="8">
    <location>
        <begin position="691"/>
        <end position="702"/>
    </location>
</feature>
<feature type="compositionally biased region" description="Polar residues" evidence="8">
    <location>
        <begin position="747"/>
        <end position="757"/>
    </location>
</feature>
<feature type="compositionally biased region" description="Basic and acidic residues" evidence="8">
    <location>
        <begin position="1079"/>
        <end position="1099"/>
    </location>
</feature>
<feature type="compositionally biased region" description="Polar residues" evidence="8">
    <location>
        <begin position="1181"/>
        <end position="1200"/>
    </location>
</feature>
<feature type="active site" description="Proton acceptor" evidence="5 7">
    <location>
        <position position="155"/>
    </location>
</feature>
<feature type="binding site" evidence="5">
    <location>
        <begin position="40"/>
        <end position="48"/>
    </location>
    <ligand>
        <name>ATP</name>
        <dbReference type="ChEBI" id="CHEBI:30616"/>
    </ligand>
</feature>
<feature type="binding site" evidence="5">
    <location>
        <position position="63"/>
    </location>
    <ligand>
        <name>ATP</name>
        <dbReference type="ChEBI" id="CHEBI:30616"/>
    </ligand>
</feature>
<feature type="site" description="Cleavage; by caspase-3" evidence="1">
    <location>
        <begin position="438"/>
        <end position="439"/>
    </location>
</feature>
<feature type="modified residue" description="Phosphoserine" evidence="3">
    <location>
        <position position="14"/>
    </location>
</feature>
<feature type="modified residue" description="Phosphothreonine" evidence="2">
    <location>
        <position position="183"/>
    </location>
</feature>
<feature type="modified residue" description="Phosphoserine" evidence="3">
    <location>
        <position position="189"/>
    </location>
</feature>
<feature type="modified residue" description="Phosphoserine" evidence="10">
    <location>
        <position position="340"/>
    </location>
</feature>
<feature type="modified residue" description="Phosphoserine" evidence="3">
    <location>
        <position position="341"/>
    </location>
</feature>
<feature type="modified residue" description="Phosphoserine" evidence="3">
    <location>
        <position position="344"/>
    </location>
</feature>
<feature type="modified residue" description="Phosphoserine" evidence="10">
    <location>
        <position position="347"/>
    </location>
</feature>
<feature type="modified residue" description="Phosphoserine" evidence="10">
    <location>
        <position position="348"/>
    </location>
</feature>
<feature type="modified residue" description="Phosphoserine" evidence="2">
    <location>
        <position position="354"/>
    </location>
</feature>
<feature type="modified residue" description="Phosphoserine" evidence="3">
    <location>
        <position position="372"/>
    </location>
</feature>
<feature type="modified residue" description="Phosphoserine" evidence="2">
    <location>
        <position position="545"/>
    </location>
</feature>
<feature type="modified residue" description="Phosphoserine" evidence="3">
    <location>
        <position position="563"/>
    </location>
</feature>
<feature type="modified residue" description="Phosphoserine" evidence="10">
    <location>
        <position position="645"/>
    </location>
</feature>
<feature type="modified residue" description="Phosphoserine" evidence="10">
    <location>
        <position position="649"/>
    </location>
</feature>
<feature type="modified residue" description="Phosphoserine" evidence="2">
    <location>
        <position position="668"/>
    </location>
</feature>
<feature type="modified residue" description="Phosphoserine" evidence="3">
    <location>
        <position position="776"/>
    </location>
</feature>
<feature type="modified residue" description="Phosphoserine" evidence="10">
    <location>
        <position position="778"/>
    </location>
</feature>
<feature type="modified residue" description="Phosphothreonine" evidence="3">
    <location>
        <position position="813"/>
    </location>
</feature>
<feature type="modified residue" description="Phosphoserine" evidence="3">
    <location>
        <position position="817"/>
    </location>
</feature>
<feature type="modified residue" description="Phosphothreonine" evidence="3">
    <location>
        <position position="1065"/>
    </location>
</feature>
<feature type="sequence conflict" description="In Ref. 2." evidence="9" ref="2">
    <original>L</original>
    <variation>I</variation>
    <location>
        <position position="165"/>
    </location>
</feature>